<proteinExistence type="inferred from homology"/>
<gene>
    <name evidence="1" type="primary">petL</name>
    <name type="ordered locus">Poptr_cp041</name>
</gene>
<sequence>MPTLTSYFGFLLVALTITLVLFISLSKIRLI</sequence>
<protein>
    <recommendedName>
        <fullName evidence="1">Cytochrome b6-f complex subunit 6</fullName>
    </recommendedName>
    <alternativeName>
        <fullName evidence="1">Cytochrome b6-f complex subunit PetL</fullName>
    </alternativeName>
    <alternativeName>
        <fullName evidence="1">Cytochrome b6-f complex subunit VI</fullName>
    </alternativeName>
</protein>
<reference key="1">
    <citation type="journal article" date="2006" name="Science">
        <title>The genome of black cottonwood, Populus trichocarpa (Torr. &amp; Gray).</title>
        <authorList>
            <person name="Tuskan G.A."/>
            <person name="Difazio S."/>
            <person name="Jansson S."/>
            <person name="Bohlmann J."/>
            <person name="Grigoriev I."/>
            <person name="Hellsten U."/>
            <person name="Putnam N."/>
            <person name="Ralph S."/>
            <person name="Rombauts S."/>
            <person name="Salamov A."/>
            <person name="Schein J."/>
            <person name="Sterck L."/>
            <person name="Aerts A."/>
            <person name="Bhalerao R.R."/>
            <person name="Bhalerao R.P."/>
            <person name="Blaudez D."/>
            <person name="Boerjan W."/>
            <person name="Brun A."/>
            <person name="Brunner A."/>
            <person name="Busov V."/>
            <person name="Campbell M."/>
            <person name="Carlson J."/>
            <person name="Chalot M."/>
            <person name="Chapman J."/>
            <person name="Chen G.-L."/>
            <person name="Cooper D."/>
            <person name="Coutinho P.M."/>
            <person name="Couturier J."/>
            <person name="Covert S."/>
            <person name="Cronk Q."/>
            <person name="Cunningham R."/>
            <person name="Davis J."/>
            <person name="Degroeve S."/>
            <person name="Dejardin A."/>
            <person name="dePamphilis C.W."/>
            <person name="Detter J."/>
            <person name="Dirks B."/>
            <person name="Dubchak I."/>
            <person name="Duplessis S."/>
            <person name="Ehlting J."/>
            <person name="Ellis B."/>
            <person name="Gendler K."/>
            <person name="Goodstein D."/>
            <person name="Gribskov M."/>
            <person name="Grimwood J."/>
            <person name="Groover A."/>
            <person name="Gunter L."/>
            <person name="Hamberger B."/>
            <person name="Heinze B."/>
            <person name="Helariutta Y."/>
            <person name="Henrissat B."/>
            <person name="Holligan D."/>
            <person name="Holt R."/>
            <person name="Huang W."/>
            <person name="Islam-Faridi N."/>
            <person name="Jones S."/>
            <person name="Jones-Rhoades M."/>
            <person name="Jorgensen R."/>
            <person name="Joshi C."/>
            <person name="Kangasjaervi J."/>
            <person name="Karlsson J."/>
            <person name="Kelleher C."/>
            <person name="Kirkpatrick R."/>
            <person name="Kirst M."/>
            <person name="Kohler A."/>
            <person name="Kalluri U."/>
            <person name="Larimer F."/>
            <person name="Leebens-Mack J."/>
            <person name="Leple J.-C."/>
            <person name="Locascio P."/>
            <person name="Lou Y."/>
            <person name="Lucas S."/>
            <person name="Martin F."/>
            <person name="Montanini B."/>
            <person name="Napoli C."/>
            <person name="Nelson D.R."/>
            <person name="Nelson C."/>
            <person name="Nieminen K."/>
            <person name="Nilsson O."/>
            <person name="Pereda V."/>
            <person name="Peter G."/>
            <person name="Philippe R."/>
            <person name="Pilate G."/>
            <person name="Poliakov A."/>
            <person name="Razumovskaya J."/>
            <person name="Richardson P."/>
            <person name="Rinaldi C."/>
            <person name="Ritland K."/>
            <person name="Rouze P."/>
            <person name="Ryaboy D."/>
            <person name="Schmutz J."/>
            <person name="Schrader J."/>
            <person name="Segerman B."/>
            <person name="Shin H."/>
            <person name="Siddiqui A."/>
            <person name="Sterky F."/>
            <person name="Terry A."/>
            <person name="Tsai C.-J."/>
            <person name="Uberbacher E."/>
            <person name="Unneberg P."/>
            <person name="Vahala J."/>
            <person name="Wall K."/>
            <person name="Wessler S."/>
            <person name="Yang G."/>
            <person name="Yin T."/>
            <person name="Douglas C."/>
            <person name="Marra M."/>
            <person name="Sandberg G."/>
            <person name="Van de Peer Y."/>
            <person name="Rokhsar D.S."/>
        </authorList>
    </citation>
    <scope>NUCLEOTIDE SEQUENCE [LARGE SCALE GENOMIC DNA]</scope>
    <source>
        <strain>cv. Nisqually</strain>
    </source>
</reference>
<name>PETL_POPTR</name>
<accession>A4GYS9</accession>
<dbReference type="EMBL" id="EF489041">
    <property type="protein sequence ID" value="ABO36723.1"/>
    <property type="molecule type" value="Genomic_DNA"/>
</dbReference>
<dbReference type="RefSeq" id="YP_001109520.1">
    <property type="nucleotide sequence ID" value="NC_009143.1"/>
</dbReference>
<dbReference type="SMR" id="A4GYS9"/>
<dbReference type="GeneID" id="4929688"/>
<dbReference type="KEGG" id="pop:4929688"/>
<dbReference type="InParanoid" id="A4GYS9"/>
<dbReference type="OrthoDB" id="738066at2759"/>
<dbReference type="Proteomes" id="UP000006729">
    <property type="component" value="Chloroplast"/>
</dbReference>
<dbReference type="GO" id="GO:0009535">
    <property type="term" value="C:chloroplast thylakoid membrane"/>
    <property type="evidence" value="ECO:0007669"/>
    <property type="project" value="UniProtKB-SubCell"/>
</dbReference>
<dbReference type="GO" id="GO:0009512">
    <property type="term" value="C:cytochrome b6f complex"/>
    <property type="evidence" value="ECO:0007669"/>
    <property type="project" value="InterPro"/>
</dbReference>
<dbReference type="GO" id="GO:0045158">
    <property type="term" value="F:electron transporter, transferring electrons within cytochrome b6/f complex of photosystem II activity"/>
    <property type="evidence" value="ECO:0007669"/>
    <property type="project" value="UniProtKB-UniRule"/>
</dbReference>
<dbReference type="GO" id="GO:0015979">
    <property type="term" value="P:photosynthesis"/>
    <property type="evidence" value="ECO:0007669"/>
    <property type="project" value="UniProtKB-KW"/>
</dbReference>
<dbReference type="HAMAP" id="MF_00433">
    <property type="entry name" value="Cytb6_f_PetL"/>
    <property type="match status" value="1"/>
</dbReference>
<dbReference type="InterPro" id="IPR007802">
    <property type="entry name" value="Cyt_b6/f_cplx_su6"/>
</dbReference>
<dbReference type="PANTHER" id="PTHR37266">
    <property type="entry name" value="CYTOCHROME B6-F COMPLEX SUBUNIT 6"/>
    <property type="match status" value="1"/>
</dbReference>
<dbReference type="PANTHER" id="PTHR37266:SF1">
    <property type="entry name" value="CYTOCHROME B6-F COMPLEX SUBUNIT 6"/>
    <property type="match status" value="1"/>
</dbReference>
<dbReference type="Pfam" id="PF05115">
    <property type="entry name" value="PetL"/>
    <property type="match status" value="1"/>
</dbReference>
<evidence type="ECO:0000255" key="1">
    <source>
        <dbReference type="HAMAP-Rule" id="MF_00433"/>
    </source>
</evidence>
<organism>
    <name type="scientific">Populus trichocarpa</name>
    <name type="common">Western balsam poplar</name>
    <name type="synonym">Populus balsamifera subsp. trichocarpa</name>
    <dbReference type="NCBI Taxonomy" id="3694"/>
    <lineage>
        <taxon>Eukaryota</taxon>
        <taxon>Viridiplantae</taxon>
        <taxon>Streptophyta</taxon>
        <taxon>Embryophyta</taxon>
        <taxon>Tracheophyta</taxon>
        <taxon>Spermatophyta</taxon>
        <taxon>Magnoliopsida</taxon>
        <taxon>eudicotyledons</taxon>
        <taxon>Gunneridae</taxon>
        <taxon>Pentapetalae</taxon>
        <taxon>rosids</taxon>
        <taxon>fabids</taxon>
        <taxon>Malpighiales</taxon>
        <taxon>Salicaceae</taxon>
        <taxon>Saliceae</taxon>
        <taxon>Populus</taxon>
    </lineage>
</organism>
<geneLocation type="chloroplast"/>
<comment type="function">
    <text evidence="1">Component of the cytochrome b6-f complex, which mediates electron transfer between photosystem II (PSII) and photosystem I (PSI), cyclic electron flow around PSI, and state transitions. PetL is important for photoautotrophic growth as well as for electron transfer efficiency and stability of the cytochrome b6-f complex.</text>
</comment>
<comment type="subunit">
    <text evidence="1">The 4 large subunits of the cytochrome b6-f complex are cytochrome b6, subunit IV (17 kDa polypeptide, PetD), cytochrome f and the Rieske protein, while the 4 small subunits are PetG, PetL, PetM and PetN. The complex functions as a dimer.</text>
</comment>
<comment type="subcellular location">
    <subcellularLocation>
        <location evidence="1">Plastid</location>
        <location evidence="1">Chloroplast thylakoid membrane</location>
        <topology evidence="1">Single-pass membrane protein</topology>
    </subcellularLocation>
</comment>
<comment type="similarity">
    <text evidence="1">Belongs to the PetL family.</text>
</comment>
<keyword id="KW-0150">Chloroplast</keyword>
<keyword id="KW-0249">Electron transport</keyword>
<keyword id="KW-0472">Membrane</keyword>
<keyword id="KW-0602">Photosynthesis</keyword>
<keyword id="KW-0934">Plastid</keyword>
<keyword id="KW-1185">Reference proteome</keyword>
<keyword id="KW-0793">Thylakoid</keyword>
<keyword id="KW-0812">Transmembrane</keyword>
<keyword id="KW-1133">Transmembrane helix</keyword>
<keyword id="KW-0813">Transport</keyword>
<feature type="chain" id="PRO_0000300152" description="Cytochrome b6-f complex subunit 6">
    <location>
        <begin position="1"/>
        <end position="31"/>
    </location>
</feature>
<feature type="transmembrane region" description="Helical" evidence="1">
    <location>
        <begin position="3"/>
        <end position="23"/>
    </location>
</feature>